<sequence length="115" mass="13377">MSYRCYVDIEDPIKKPVPINSKYQSWNPNHKNPYPNTFTQAPAPSHQIMVHYNGKPQLQTLSPYQGPQMFPVRETLPNPNNSYERKNCIAYPTTHSIPGPFLRSYIDLPYKSSMY</sequence>
<feature type="chain" id="PRO_0000071332" description="Uncharacterized protein R714">
    <location>
        <begin position="1"/>
        <end position="115"/>
    </location>
</feature>
<keyword id="KW-1185">Reference proteome</keyword>
<name>YR714_MIMIV</name>
<dbReference type="EMBL" id="AY653733">
    <property type="protein sequence ID" value="AAV50974.1"/>
    <property type="molecule type" value="Genomic_DNA"/>
</dbReference>
<dbReference type="KEGG" id="vg:9925368"/>
<dbReference type="OrthoDB" id="23210at10239"/>
<dbReference type="Proteomes" id="UP000001134">
    <property type="component" value="Genome"/>
</dbReference>
<proteinExistence type="predicted"/>
<organismHost>
    <name type="scientific">Acanthamoeba polyphaga</name>
    <name type="common">Amoeba</name>
    <dbReference type="NCBI Taxonomy" id="5757"/>
</organismHost>
<reference key="1">
    <citation type="journal article" date="2004" name="Science">
        <title>The 1.2-megabase genome sequence of Mimivirus.</title>
        <authorList>
            <person name="Raoult D."/>
            <person name="Audic S."/>
            <person name="Robert C."/>
            <person name="Abergel C."/>
            <person name="Renesto P."/>
            <person name="Ogata H."/>
            <person name="La Scola B."/>
            <person name="Susan M."/>
            <person name="Claverie J.-M."/>
        </authorList>
    </citation>
    <scope>NUCLEOTIDE SEQUENCE [LARGE SCALE GENOMIC DNA]</scope>
    <source>
        <strain>Rowbotham-Bradford</strain>
    </source>
</reference>
<organism>
    <name type="scientific">Acanthamoeba polyphaga mimivirus</name>
    <name type="common">APMV</name>
    <dbReference type="NCBI Taxonomy" id="212035"/>
    <lineage>
        <taxon>Viruses</taxon>
        <taxon>Varidnaviria</taxon>
        <taxon>Bamfordvirae</taxon>
        <taxon>Nucleocytoviricota</taxon>
        <taxon>Megaviricetes</taxon>
        <taxon>Imitervirales</taxon>
        <taxon>Mimiviridae</taxon>
        <taxon>Megamimivirinae</taxon>
        <taxon>Mimivirus</taxon>
        <taxon>Mimivirus bradfordmassiliense</taxon>
    </lineage>
</organism>
<protein>
    <recommendedName>
        <fullName>Uncharacterized protein R714</fullName>
    </recommendedName>
</protein>
<gene>
    <name type="ordered locus">MIMI_R714</name>
</gene>
<accession>Q5UNX3</accession>